<feature type="chain" id="PRO_1000076601" description="Phosphoglycerate kinase">
    <location>
        <begin position="1"/>
        <end position="395"/>
    </location>
</feature>
<feature type="binding site" evidence="1">
    <location>
        <begin position="21"/>
        <end position="23"/>
    </location>
    <ligand>
        <name>substrate</name>
    </ligand>
</feature>
<feature type="binding site" evidence="1">
    <location>
        <position position="36"/>
    </location>
    <ligand>
        <name>substrate</name>
    </ligand>
</feature>
<feature type="binding site" evidence="1">
    <location>
        <begin position="59"/>
        <end position="62"/>
    </location>
    <ligand>
        <name>substrate</name>
    </ligand>
</feature>
<feature type="binding site" evidence="1">
    <location>
        <position position="120"/>
    </location>
    <ligand>
        <name>substrate</name>
    </ligand>
</feature>
<feature type="binding site" evidence="1">
    <location>
        <position position="153"/>
    </location>
    <ligand>
        <name>substrate</name>
    </ligand>
</feature>
<feature type="binding site" evidence="1">
    <location>
        <position position="203"/>
    </location>
    <ligand>
        <name>ATP</name>
        <dbReference type="ChEBI" id="CHEBI:30616"/>
    </ligand>
</feature>
<feature type="binding site" evidence="1">
    <location>
        <position position="325"/>
    </location>
    <ligand>
        <name>ATP</name>
        <dbReference type="ChEBI" id="CHEBI:30616"/>
    </ligand>
</feature>
<feature type="binding site" evidence="1">
    <location>
        <begin position="351"/>
        <end position="354"/>
    </location>
    <ligand>
        <name>ATP</name>
        <dbReference type="ChEBI" id="CHEBI:30616"/>
    </ligand>
</feature>
<accession>A7NKY6</accession>
<protein>
    <recommendedName>
        <fullName evidence="1">Phosphoglycerate kinase</fullName>
        <ecNumber evidence="1">2.7.2.3</ecNumber>
    </recommendedName>
</protein>
<organism>
    <name type="scientific">Roseiflexus castenholzii (strain DSM 13941 / HLO8)</name>
    <dbReference type="NCBI Taxonomy" id="383372"/>
    <lineage>
        <taxon>Bacteria</taxon>
        <taxon>Bacillati</taxon>
        <taxon>Chloroflexota</taxon>
        <taxon>Chloroflexia</taxon>
        <taxon>Chloroflexales</taxon>
        <taxon>Roseiflexineae</taxon>
        <taxon>Roseiflexaceae</taxon>
        <taxon>Roseiflexus</taxon>
    </lineage>
</organism>
<gene>
    <name evidence="1" type="primary">pgk</name>
    <name type="ordered locus">Rcas_2070</name>
</gene>
<keyword id="KW-0067">ATP-binding</keyword>
<keyword id="KW-0963">Cytoplasm</keyword>
<keyword id="KW-0324">Glycolysis</keyword>
<keyword id="KW-0418">Kinase</keyword>
<keyword id="KW-0547">Nucleotide-binding</keyword>
<keyword id="KW-1185">Reference proteome</keyword>
<keyword id="KW-0808">Transferase</keyword>
<name>PGK_ROSCS</name>
<evidence type="ECO:0000255" key="1">
    <source>
        <dbReference type="HAMAP-Rule" id="MF_00145"/>
    </source>
</evidence>
<dbReference type="EC" id="2.7.2.3" evidence="1"/>
<dbReference type="EMBL" id="CP000804">
    <property type="protein sequence ID" value="ABU58156.1"/>
    <property type="molecule type" value="Genomic_DNA"/>
</dbReference>
<dbReference type="RefSeq" id="WP_012120580.1">
    <property type="nucleotide sequence ID" value="NC_009767.1"/>
</dbReference>
<dbReference type="SMR" id="A7NKY6"/>
<dbReference type="STRING" id="383372.Rcas_2070"/>
<dbReference type="KEGG" id="rca:Rcas_2070"/>
<dbReference type="eggNOG" id="COG0126">
    <property type="taxonomic scope" value="Bacteria"/>
</dbReference>
<dbReference type="HOGENOM" id="CLU_025427_0_2_0"/>
<dbReference type="OrthoDB" id="9808460at2"/>
<dbReference type="UniPathway" id="UPA00109">
    <property type="reaction ID" value="UER00185"/>
</dbReference>
<dbReference type="Proteomes" id="UP000000263">
    <property type="component" value="Chromosome"/>
</dbReference>
<dbReference type="GO" id="GO:0005829">
    <property type="term" value="C:cytosol"/>
    <property type="evidence" value="ECO:0007669"/>
    <property type="project" value="TreeGrafter"/>
</dbReference>
<dbReference type="GO" id="GO:0043531">
    <property type="term" value="F:ADP binding"/>
    <property type="evidence" value="ECO:0007669"/>
    <property type="project" value="TreeGrafter"/>
</dbReference>
<dbReference type="GO" id="GO:0005524">
    <property type="term" value="F:ATP binding"/>
    <property type="evidence" value="ECO:0007669"/>
    <property type="project" value="UniProtKB-KW"/>
</dbReference>
<dbReference type="GO" id="GO:0004618">
    <property type="term" value="F:phosphoglycerate kinase activity"/>
    <property type="evidence" value="ECO:0007669"/>
    <property type="project" value="UniProtKB-UniRule"/>
</dbReference>
<dbReference type="GO" id="GO:0006094">
    <property type="term" value="P:gluconeogenesis"/>
    <property type="evidence" value="ECO:0007669"/>
    <property type="project" value="TreeGrafter"/>
</dbReference>
<dbReference type="GO" id="GO:0006096">
    <property type="term" value="P:glycolytic process"/>
    <property type="evidence" value="ECO:0007669"/>
    <property type="project" value="UniProtKB-UniRule"/>
</dbReference>
<dbReference type="CDD" id="cd00318">
    <property type="entry name" value="Phosphoglycerate_kinase"/>
    <property type="match status" value="1"/>
</dbReference>
<dbReference type="FunFam" id="3.40.50.1260:FF:000003">
    <property type="entry name" value="Phosphoglycerate kinase"/>
    <property type="match status" value="1"/>
</dbReference>
<dbReference type="FunFam" id="3.40.50.1260:FF:000006">
    <property type="entry name" value="Phosphoglycerate kinase"/>
    <property type="match status" value="1"/>
</dbReference>
<dbReference type="Gene3D" id="3.40.50.1260">
    <property type="entry name" value="Phosphoglycerate kinase, N-terminal domain"/>
    <property type="match status" value="2"/>
</dbReference>
<dbReference type="HAMAP" id="MF_00145">
    <property type="entry name" value="Phosphoglyc_kinase"/>
    <property type="match status" value="1"/>
</dbReference>
<dbReference type="InterPro" id="IPR001576">
    <property type="entry name" value="Phosphoglycerate_kinase"/>
</dbReference>
<dbReference type="InterPro" id="IPR015824">
    <property type="entry name" value="Phosphoglycerate_kinase_N"/>
</dbReference>
<dbReference type="InterPro" id="IPR036043">
    <property type="entry name" value="Phosphoglycerate_kinase_sf"/>
</dbReference>
<dbReference type="PANTHER" id="PTHR11406">
    <property type="entry name" value="PHOSPHOGLYCERATE KINASE"/>
    <property type="match status" value="1"/>
</dbReference>
<dbReference type="PANTHER" id="PTHR11406:SF23">
    <property type="entry name" value="PHOSPHOGLYCERATE KINASE 1, CHLOROPLASTIC-RELATED"/>
    <property type="match status" value="1"/>
</dbReference>
<dbReference type="Pfam" id="PF00162">
    <property type="entry name" value="PGK"/>
    <property type="match status" value="1"/>
</dbReference>
<dbReference type="PIRSF" id="PIRSF000724">
    <property type="entry name" value="Pgk"/>
    <property type="match status" value="1"/>
</dbReference>
<dbReference type="PRINTS" id="PR00477">
    <property type="entry name" value="PHGLYCKINASE"/>
</dbReference>
<dbReference type="SUPFAM" id="SSF53748">
    <property type="entry name" value="Phosphoglycerate kinase"/>
    <property type="match status" value="1"/>
</dbReference>
<sequence>MAKKTIRDIDWSGKRALVRVDFNVPLENGQITDDTRIRAALPTIRYLLEHGAAVILMSHLGRPKNKVVESMRLAPVVARLAELLPEAKAVKGSQATTGPAAEAAARDLKPGEVLVLENTRFDPREEANDESMARELAKLGDVYVNDAFGSAHRAHASTEGVARFLPAVAGFLMEAELAALQGALENPARPFVTIIGGAKISDKIGVIENLLGKVDALLIGGGMANTFLLAQGHEMGDSLVEPDSAPIAKSLLDQAAQRGVRLMLPTDVVIADAFSADANRKVVPVGEIPPGWRALDIGPETIRAYTEVITGAQTVIWNGPMGVFELAPFAEGTRAIAQAMANCPGMTIIGGGDSVAAIEQMGLADKIRHISTGGGASLELLEGRILPGVAALNDA</sequence>
<reference key="1">
    <citation type="submission" date="2007-08" db="EMBL/GenBank/DDBJ databases">
        <title>Complete sequence of Roseiflexus castenholzii DSM 13941.</title>
        <authorList>
            <consortium name="US DOE Joint Genome Institute"/>
            <person name="Copeland A."/>
            <person name="Lucas S."/>
            <person name="Lapidus A."/>
            <person name="Barry K."/>
            <person name="Glavina del Rio T."/>
            <person name="Dalin E."/>
            <person name="Tice H."/>
            <person name="Pitluck S."/>
            <person name="Thompson L.S."/>
            <person name="Brettin T."/>
            <person name="Bruce D."/>
            <person name="Detter J.C."/>
            <person name="Han C."/>
            <person name="Tapia R."/>
            <person name="Schmutz J."/>
            <person name="Larimer F."/>
            <person name="Land M."/>
            <person name="Hauser L."/>
            <person name="Kyrpides N."/>
            <person name="Mikhailova N."/>
            <person name="Bryant D.A."/>
            <person name="Hanada S."/>
            <person name="Tsukatani Y."/>
            <person name="Richardson P."/>
        </authorList>
    </citation>
    <scope>NUCLEOTIDE SEQUENCE [LARGE SCALE GENOMIC DNA]</scope>
    <source>
        <strain>DSM 13941 / HLO8</strain>
    </source>
</reference>
<proteinExistence type="inferred from homology"/>
<comment type="catalytic activity">
    <reaction evidence="1">
        <text>(2R)-3-phosphoglycerate + ATP = (2R)-3-phospho-glyceroyl phosphate + ADP</text>
        <dbReference type="Rhea" id="RHEA:14801"/>
        <dbReference type="ChEBI" id="CHEBI:30616"/>
        <dbReference type="ChEBI" id="CHEBI:57604"/>
        <dbReference type="ChEBI" id="CHEBI:58272"/>
        <dbReference type="ChEBI" id="CHEBI:456216"/>
        <dbReference type="EC" id="2.7.2.3"/>
    </reaction>
</comment>
<comment type="pathway">
    <text evidence="1">Carbohydrate degradation; glycolysis; pyruvate from D-glyceraldehyde 3-phosphate: step 2/5.</text>
</comment>
<comment type="subunit">
    <text evidence="1">Monomer.</text>
</comment>
<comment type="subcellular location">
    <subcellularLocation>
        <location evidence="1">Cytoplasm</location>
    </subcellularLocation>
</comment>
<comment type="similarity">
    <text evidence="1">Belongs to the phosphoglycerate kinase family.</text>
</comment>